<sequence length="875" mass="96924">MTDIDVRLREDVHVLGELLGETIRQQHGDAFLQKIEDIRHSAKADRRGPGEQLSSTLADLAEEDLLPVARAFNQFLNLANMAEQYQLIRRRDADQPEPFEAQVLPELLGRLKQAGHSNDALARQLAKLDIQLVLTAHPTEVARRTLIQKYDAIAGQLAAQDHRDLTSAERQQVRERLRRLIAEAWHTEEIRRTRPTPVDEAKWGFAVIEHSLWHAIPSHLRKVDKALLEATGLRLPLEAAPIRFASWMGGDRDGNPNVTAAVTREVLLLARWMAADLFLRDIDALAAELSMQQANDALRKQVGDSAEPYRAVLKQLRDRLRATRAWAHSALTSNQPAGADVLVDNRELIAPLELCYQSLHECGMGVIAEGPLLDCLRRAVTFGLFLGRLDVRQDAARHRDALTEITDYLGLGRYADWDEEQRIAFLQAELKNRRPLLPAHFKPQADTAEVLATCREVAAAPAASLGSYVISMAGAASDVLAVQLLLKEAGLTRPMRVVPLFETLADLDNAGPVMQRLLGLPGYRAGLRGPQEVMIGYSDSAKDAGTTAAAWAQYRAQENLVRICAEHQVELLLFHGRGGTVGRGGGPAHAAILSQPPGSVAGRFRTTEQGEMIRFKFGLPGIAEQNLNLYLAAVLEATLLPPPPPQPAWREVMDQLAADGVQAYRSVVRENPDFVEYFRQSTPEQELGRLPLGSRPAKRRAGGIESLRAIPWIFGWTQTRLMLPAWLGWETALTNALARGQGELLAQMREQWPFFRTRIDMLEMVLAKADAQIAEAYDERLVQPHLRPLGAHLRDLLSQSCQVVLGLTGQPVLLAHSPETLEFISLRNTYLDPLHRLQAELLARSRSREAALDSPLEQALLVTVAGIAAGLRNTG</sequence>
<gene>
    <name evidence="1" type="primary">ppc</name>
    <name type="ordered locus">Pput_4217</name>
</gene>
<organism>
    <name type="scientific">Pseudomonas putida (strain ATCC 700007 / DSM 6899 / JCM 31910 / BCRC 17059 / LMG 24140 / F1)</name>
    <dbReference type="NCBI Taxonomy" id="351746"/>
    <lineage>
        <taxon>Bacteria</taxon>
        <taxon>Pseudomonadati</taxon>
        <taxon>Pseudomonadota</taxon>
        <taxon>Gammaproteobacteria</taxon>
        <taxon>Pseudomonadales</taxon>
        <taxon>Pseudomonadaceae</taxon>
        <taxon>Pseudomonas</taxon>
    </lineage>
</organism>
<protein>
    <recommendedName>
        <fullName evidence="1">Phosphoenolpyruvate carboxylase</fullName>
        <shortName evidence="1">PEPC</shortName>
        <shortName evidence="1">PEPCase</shortName>
        <ecNumber evidence="1">4.1.1.31</ecNumber>
    </recommendedName>
</protein>
<feature type="chain" id="PRO_1000025579" description="Phosphoenolpyruvate carboxylase">
    <location>
        <begin position="1"/>
        <end position="875"/>
    </location>
</feature>
<feature type="active site" evidence="1">
    <location>
        <position position="137"/>
    </location>
</feature>
<feature type="active site" evidence="1">
    <location>
        <position position="542"/>
    </location>
</feature>
<evidence type="ECO:0000255" key="1">
    <source>
        <dbReference type="HAMAP-Rule" id="MF_00595"/>
    </source>
</evidence>
<comment type="function">
    <text evidence="1">Forms oxaloacetate, a four-carbon dicarboxylic acid source for the tricarboxylic acid cycle.</text>
</comment>
<comment type="catalytic activity">
    <reaction evidence="1">
        <text>oxaloacetate + phosphate = phosphoenolpyruvate + hydrogencarbonate</text>
        <dbReference type="Rhea" id="RHEA:28370"/>
        <dbReference type="ChEBI" id="CHEBI:16452"/>
        <dbReference type="ChEBI" id="CHEBI:17544"/>
        <dbReference type="ChEBI" id="CHEBI:43474"/>
        <dbReference type="ChEBI" id="CHEBI:58702"/>
        <dbReference type="EC" id="4.1.1.31"/>
    </reaction>
</comment>
<comment type="cofactor">
    <cofactor evidence="1">
        <name>Mg(2+)</name>
        <dbReference type="ChEBI" id="CHEBI:18420"/>
    </cofactor>
</comment>
<comment type="similarity">
    <text evidence="1">Belongs to the PEPCase type 1 family.</text>
</comment>
<name>CAPP_PSEP1</name>
<reference key="1">
    <citation type="submission" date="2007-05" db="EMBL/GenBank/DDBJ databases">
        <title>Complete sequence of Pseudomonas putida F1.</title>
        <authorList>
            <consortium name="US DOE Joint Genome Institute"/>
            <person name="Copeland A."/>
            <person name="Lucas S."/>
            <person name="Lapidus A."/>
            <person name="Barry K."/>
            <person name="Detter J.C."/>
            <person name="Glavina del Rio T."/>
            <person name="Hammon N."/>
            <person name="Israni S."/>
            <person name="Dalin E."/>
            <person name="Tice H."/>
            <person name="Pitluck S."/>
            <person name="Chain P."/>
            <person name="Malfatti S."/>
            <person name="Shin M."/>
            <person name="Vergez L."/>
            <person name="Schmutz J."/>
            <person name="Larimer F."/>
            <person name="Land M."/>
            <person name="Hauser L."/>
            <person name="Kyrpides N."/>
            <person name="Lykidis A."/>
            <person name="Parales R."/>
            <person name="Richardson P."/>
        </authorList>
    </citation>
    <scope>NUCLEOTIDE SEQUENCE [LARGE SCALE GENOMIC DNA]</scope>
    <source>
        <strain>ATCC 700007 / DSM 6899 / JCM 31910 / BCRC 17059 / LMG 24140 / F1</strain>
    </source>
</reference>
<proteinExistence type="inferred from homology"/>
<keyword id="KW-0120">Carbon dioxide fixation</keyword>
<keyword id="KW-0456">Lyase</keyword>
<keyword id="KW-0460">Magnesium</keyword>
<dbReference type="EC" id="4.1.1.31" evidence="1"/>
<dbReference type="EMBL" id="CP000712">
    <property type="protein sequence ID" value="ABQ80341.1"/>
    <property type="molecule type" value="Genomic_DNA"/>
</dbReference>
<dbReference type="SMR" id="A5W881"/>
<dbReference type="KEGG" id="ppf:Pput_4217"/>
<dbReference type="eggNOG" id="COG2352">
    <property type="taxonomic scope" value="Bacteria"/>
</dbReference>
<dbReference type="HOGENOM" id="CLU_006557_2_0_6"/>
<dbReference type="GO" id="GO:0005829">
    <property type="term" value="C:cytosol"/>
    <property type="evidence" value="ECO:0007669"/>
    <property type="project" value="TreeGrafter"/>
</dbReference>
<dbReference type="GO" id="GO:0000287">
    <property type="term" value="F:magnesium ion binding"/>
    <property type="evidence" value="ECO:0007669"/>
    <property type="project" value="UniProtKB-UniRule"/>
</dbReference>
<dbReference type="GO" id="GO:0008964">
    <property type="term" value="F:phosphoenolpyruvate carboxylase activity"/>
    <property type="evidence" value="ECO:0007669"/>
    <property type="project" value="UniProtKB-UniRule"/>
</dbReference>
<dbReference type="GO" id="GO:0015977">
    <property type="term" value="P:carbon fixation"/>
    <property type="evidence" value="ECO:0007669"/>
    <property type="project" value="UniProtKB-UniRule"/>
</dbReference>
<dbReference type="GO" id="GO:0006107">
    <property type="term" value="P:oxaloacetate metabolic process"/>
    <property type="evidence" value="ECO:0007669"/>
    <property type="project" value="UniProtKB-UniRule"/>
</dbReference>
<dbReference type="GO" id="GO:0006099">
    <property type="term" value="P:tricarboxylic acid cycle"/>
    <property type="evidence" value="ECO:0007669"/>
    <property type="project" value="InterPro"/>
</dbReference>
<dbReference type="Gene3D" id="1.20.1440.90">
    <property type="entry name" value="Phosphoenolpyruvate/pyruvate domain"/>
    <property type="match status" value="1"/>
</dbReference>
<dbReference type="HAMAP" id="MF_00595">
    <property type="entry name" value="PEPcase_type1"/>
    <property type="match status" value="1"/>
</dbReference>
<dbReference type="InterPro" id="IPR021135">
    <property type="entry name" value="PEP_COase"/>
</dbReference>
<dbReference type="InterPro" id="IPR022805">
    <property type="entry name" value="PEP_COase_bac/pln-type"/>
</dbReference>
<dbReference type="InterPro" id="IPR018129">
    <property type="entry name" value="PEP_COase_Lys_AS"/>
</dbReference>
<dbReference type="InterPro" id="IPR033129">
    <property type="entry name" value="PEPCASE_His_AS"/>
</dbReference>
<dbReference type="InterPro" id="IPR015813">
    <property type="entry name" value="Pyrv/PenolPyrv_kinase-like_dom"/>
</dbReference>
<dbReference type="NCBIfam" id="NF000584">
    <property type="entry name" value="PRK00009.1"/>
    <property type="match status" value="1"/>
</dbReference>
<dbReference type="PANTHER" id="PTHR30523">
    <property type="entry name" value="PHOSPHOENOLPYRUVATE CARBOXYLASE"/>
    <property type="match status" value="1"/>
</dbReference>
<dbReference type="PANTHER" id="PTHR30523:SF6">
    <property type="entry name" value="PHOSPHOENOLPYRUVATE CARBOXYLASE"/>
    <property type="match status" value="1"/>
</dbReference>
<dbReference type="Pfam" id="PF00311">
    <property type="entry name" value="PEPcase"/>
    <property type="match status" value="1"/>
</dbReference>
<dbReference type="PRINTS" id="PR00150">
    <property type="entry name" value="PEPCARBXLASE"/>
</dbReference>
<dbReference type="SUPFAM" id="SSF51621">
    <property type="entry name" value="Phosphoenolpyruvate/pyruvate domain"/>
    <property type="match status" value="1"/>
</dbReference>
<dbReference type="PROSITE" id="PS00781">
    <property type="entry name" value="PEPCASE_1"/>
    <property type="match status" value="1"/>
</dbReference>
<dbReference type="PROSITE" id="PS00393">
    <property type="entry name" value="PEPCASE_2"/>
    <property type="match status" value="1"/>
</dbReference>
<accession>A5W881</accession>